<protein>
    <recommendedName>
        <fullName evidence="1">Ribosome-recycling factor</fullName>
        <shortName evidence="1">RRF</shortName>
    </recommendedName>
    <alternativeName>
        <fullName evidence="1">Ribosome-releasing factor</fullName>
    </alternativeName>
</protein>
<accession>Q83BV4</accession>
<organism>
    <name type="scientific">Coxiella burnetii (strain RSA 493 / Nine Mile phase I)</name>
    <dbReference type="NCBI Taxonomy" id="227377"/>
    <lineage>
        <taxon>Bacteria</taxon>
        <taxon>Pseudomonadati</taxon>
        <taxon>Pseudomonadota</taxon>
        <taxon>Gammaproteobacteria</taxon>
        <taxon>Legionellales</taxon>
        <taxon>Coxiellaceae</taxon>
        <taxon>Coxiella</taxon>
    </lineage>
</organism>
<dbReference type="EMBL" id="AE016828">
    <property type="protein sequence ID" value="AAO90886.1"/>
    <property type="molecule type" value="Genomic_DNA"/>
</dbReference>
<dbReference type="RefSeq" id="WP_010958191.1">
    <property type="nucleotide sequence ID" value="NC_002971.4"/>
</dbReference>
<dbReference type="SMR" id="Q83BV4"/>
<dbReference type="STRING" id="227377.CBU_1383"/>
<dbReference type="DNASU" id="1209289"/>
<dbReference type="EnsemblBacteria" id="AAO90886">
    <property type="protein sequence ID" value="AAO90886"/>
    <property type="gene ID" value="CBU_1383"/>
</dbReference>
<dbReference type="KEGG" id="cbu:CBU_1383"/>
<dbReference type="PATRIC" id="fig|227377.7.peg.1379"/>
<dbReference type="eggNOG" id="COG0233">
    <property type="taxonomic scope" value="Bacteria"/>
</dbReference>
<dbReference type="HOGENOM" id="CLU_073981_2_0_6"/>
<dbReference type="OrthoDB" id="9804006at2"/>
<dbReference type="Proteomes" id="UP000002671">
    <property type="component" value="Chromosome"/>
</dbReference>
<dbReference type="GO" id="GO:0005737">
    <property type="term" value="C:cytoplasm"/>
    <property type="evidence" value="ECO:0000318"/>
    <property type="project" value="GO_Central"/>
</dbReference>
<dbReference type="GO" id="GO:0005829">
    <property type="term" value="C:cytosol"/>
    <property type="evidence" value="ECO:0007669"/>
    <property type="project" value="GOC"/>
</dbReference>
<dbReference type="GO" id="GO:0043023">
    <property type="term" value="F:ribosomal large subunit binding"/>
    <property type="evidence" value="ECO:0000318"/>
    <property type="project" value="GO_Central"/>
</dbReference>
<dbReference type="GO" id="GO:0002184">
    <property type="term" value="P:cytoplasmic translational termination"/>
    <property type="evidence" value="ECO:0000318"/>
    <property type="project" value="GO_Central"/>
</dbReference>
<dbReference type="GO" id="GO:0006412">
    <property type="term" value="P:translation"/>
    <property type="evidence" value="ECO:0000318"/>
    <property type="project" value="GO_Central"/>
</dbReference>
<dbReference type="CDD" id="cd00520">
    <property type="entry name" value="RRF"/>
    <property type="match status" value="1"/>
</dbReference>
<dbReference type="FunFam" id="1.10.132.20:FF:000001">
    <property type="entry name" value="Ribosome-recycling factor"/>
    <property type="match status" value="1"/>
</dbReference>
<dbReference type="FunFam" id="3.30.1360.40:FF:000001">
    <property type="entry name" value="Ribosome-recycling factor"/>
    <property type="match status" value="1"/>
</dbReference>
<dbReference type="Gene3D" id="3.30.1360.40">
    <property type="match status" value="1"/>
</dbReference>
<dbReference type="Gene3D" id="1.10.132.20">
    <property type="entry name" value="Ribosome-recycling factor"/>
    <property type="match status" value="1"/>
</dbReference>
<dbReference type="HAMAP" id="MF_00040">
    <property type="entry name" value="RRF"/>
    <property type="match status" value="1"/>
</dbReference>
<dbReference type="InterPro" id="IPR002661">
    <property type="entry name" value="Ribosome_recyc_fac"/>
</dbReference>
<dbReference type="InterPro" id="IPR023584">
    <property type="entry name" value="Ribosome_recyc_fac_dom"/>
</dbReference>
<dbReference type="InterPro" id="IPR036191">
    <property type="entry name" value="RRF_sf"/>
</dbReference>
<dbReference type="NCBIfam" id="TIGR00496">
    <property type="entry name" value="frr"/>
    <property type="match status" value="1"/>
</dbReference>
<dbReference type="PANTHER" id="PTHR20982:SF3">
    <property type="entry name" value="MITOCHONDRIAL RIBOSOME RECYCLING FACTOR PSEUDO 1"/>
    <property type="match status" value="1"/>
</dbReference>
<dbReference type="PANTHER" id="PTHR20982">
    <property type="entry name" value="RIBOSOME RECYCLING FACTOR"/>
    <property type="match status" value="1"/>
</dbReference>
<dbReference type="Pfam" id="PF01765">
    <property type="entry name" value="RRF"/>
    <property type="match status" value="1"/>
</dbReference>
<dbReference type="SUPFAM" id="SSF55194">
    <property type="entry name" value="Ribosome recycling factor, RRF"/>
    <property type="match status" value="1"/>
</dbReference>
<sequence length="185" mass="20945">MINDIINDSKSRMEKSLGSLKTELAKLRTCRAHPSLLEHIKVDYYNVETPLSQVASIAIENPRTLSITPWEKNMVGPIEKAIQKADLGLNPATVGMVIRVPLPPLTEERRKELARVVREEAEHARVAIRNIRREANNDLKELMKEKEISEDEERRAQTAIQKLTDAQIAEVDKMASQKEADLMAV</sequence>
<evidence type="ECO:0000255" key="1">
    <source>
        <dbReference type="HAMAP-Rule" id="MF_00040"/>
    </source>
</evidence>
<keyword id="KW-0963">Cytoplasm</keyword>
<keyword id="KW-0648">Protein biosynthesis</keyword>
<keyword id="KW-1185">Reference proteome</keyword>
<gene>
    <name evidence="1" type="primary">frr</name>
    <name type="ordered locus">CBU_1383</name>
</gene>
<reference key="1">
    <citation type="journal article" date="2003" name="Proc. Natl. Acad. Sci. U.S.A.">
        <title>Complete genome sequence of the Q-fever pathogen, Coxiella burnetii.</title>
        <authorList>
            <person name="Seshadri R."/>
            <person name="Paulsen I.T."/>
            <person name="Eisen J.A."/>
            <person name="Read T.D."/>
            <person name="Nelson K.E."/>
            <person name="Nelson W.C."/>
            <person name="Ward N.L."/>
            <person name="Tettelin H."/>
            <person name="Davidsen T.M."/>
            <person name="Beanan M.J."/>
            <person name="DeBoy R.T."/>
            <person name="Daugherty S.C."/>
            <person name="Brinkac L.M."/>
            <person name="Madupu R."/>
            <person name="Dodson R.J."/>
            <person name="Khouri H.M."/>
            <person name="Lee K.H."/>
            <person name="Carty H.A."/>
            <person name="Scanlan D."/>
            <person name="Heinzen R.A."/>
            <person name="Thompson H.A."/>
            <person name="Samuel J.E."/>
            <person name="Fraser C.M."/>
            <person name="Heidelberg J.F."/>
        </authorList>
    </citation>
    <scope>NUCLEOTIDE SEQUENCE [LARGE SCALE GENOMIC DNA]</scope>
    <source>
        <strain>RSA 493 / Nine Mile phase I</strain>
    </source>
</reference>
<feature type="chain" id="PRO_0000167450" description="Ribosome-recycling factor">
    <location>
        <begin position="1"/>
        <end position="185"/>
    </location>
</feature>
<name>RRF_COXBU</name>
<proteinExistence type="inferred from homology"/>
<comment type="function">
    <text evidence="1">Responsible for the release of ribosomes from messenger RNA at the termination of protein biosynthesis. May increase the efficiency of translation by recycling ribosomes from one round of translation to another.</text>
</comment>
<comment type="subcellular location">
    <subcellularLocation>
        <location evidence="1">Cytoplasm</location>
    </subcellularLocation>
</comment>
<comment type="similarity">
    <text evidence="1">Belongs to the RRF family.</text>
</comment>